<feature type="chain" id="PRO_1000008051" description="DNA mismatch repair protein MutS">
    <location>
        <begin position="1"/>
        <end position="891"/>
    </location>
</feature>
<feature type="binding site" evidence="1">
    <location>
        <begin position="634"/>
        <end position="641"/>
    </location>
    <ligand>
        <name>ATP</name>
        <dbReference type="ChEBI" id="CHEBI:30616"/>
    </ligand>
</feature>
<sequence length="891" mass="96258">MATQIDASSEAAAATAAAQHTPMMQQYLRIKSEHPDTLVFYRMGDFYELFFEDAEKAARLLDLTLTQRGASAGTPIKMAGVPHHAVEQYLAKLVKFGESAAICEQIGDPATSKGPVERKVVRVVTPGTLTDAALLSDKSDVFLLALCVGHNKRGVASNIGLAWLNLASGALRLAELAPDQLGAALERIRPAEILAADGTIESVPAGMGAITRVPAWHFDIASGTQRLCDQLEVASLDGFGAQALTSANGAAGALLIYAAATQGQQLRHVRSLKVENESEYIGLDPSTRRNLELTETLRGTESPTLYSLLDTCCTAMGSRLLRHWLHHPPRASVAAQARHQAIGALLDAPPNAGLDSLRSALRQIADVERITGRLALLSARPRDLSSLRDTFAALPALRERVAEIASNAAALGRLGAALEPPPGCLDLLTRAIAAEPAAMVRDGGVIARGYDAELDELRDISENCGQFLIDLETRERARTGISNLRVEYNKVHGFYIEVTRGQTDKVPDDYRRRQTLKNAERYITPELKTFEDKALSAQERALARERALYDGVLQALLPHIEGCQRVASGLAELDLLAAFAERARTLDWVAPEFTDEIGIEIDQGRHPVVEAQVEQFIANDCALNPERKLLLITGPNMGGKSTFMRQTALIALMAYVGSYVPAKAARFGPIDRIFTRIGAADDLAGGRSTFMVEMTEAAAILNDATPHSLVLMDEIGRGTSTFDGLALAWAIARHLLSHNRCYTLFATHYFELTQLPAEFPQAANVHLSAVEHGHGIVFLHAVEEGPANQSYGLQVAQLAGVPAPVIRAARKHLAHLEQQSAAQATPQLDLFAAPTVVDEPECNEPPAAATPHPALERLLELDPDDLKPRDALDLLYELHTLARSGPADAQR</sequence>
<name>MUTS_BURP6</name>
<comment type="function">
    <text evidence="1">This protein is involved in the repair of mismatches in DNA. It is possible that it carries out the mismatch recognition step. This protein has a weak ATPase activity.</text>
</comment>
<comment type="similarity">
    <text evidence="1">Belongs to the DNA mismatch repair MutS family.</text>
</comment>
<organism>
    <name type="scientific">Burkholderia pseudomallei (strain 668)</name>
    <dbReference type="NCBI Taxonomy" id="320373"/>
    <lineage>
        <taxon>Bacteria</taxon>
        <taxon>Pseudomonadati</taxon>
        <taxon>Pseudomonadota</taxon>
        <taxon>Betaproteobacteria</taxon>
        <taxon>Burkholderiales</taxon>
        <taxon>Burkholderiaceae</taxon>
        <taxon>Burkholderia</taxon>
        <taxon>pseudomallei group</taxon>
    </lineage>
</organism>
<dbReference type="EMBL" id="CP000570">
    <property type="protein sequence ID" value="ABN85141.1"/>
    <property type="molecule type" value="Genomic_DNA"/>
</dbReference>
<dbReference type="SMR" id="A3NB64"/>
<dbReference type="KEGG" id="bpd:BURPS668_2559"/>
<dbReference type="HOGENOM" id="CLU_002472_4_0_4"/>
<dbReference type="GO" id="GO:0005829">
    <property type="term" value="C:cytosol"/>
    <property type="evidence" value="ECO:0007669"/>
    <property type="project" value="TreeGrafter"/>
</dbReference>
<dbReference type="GO" id="GO:0005524">
    <property type="term" value="F:ATP binding"/>
    <property type="evidence" value="ECO:0007669"/>
    <property type="project" value="UniProtKB-UniRule"/>
</dbReference>
<dbReference type="GO" id="GO:0140664">
    <property type="term" value="F:ATP-dependent DNA damage sensor activity"/>
    <property type="evidence" value="ECO:0007669"/>
    <property type="project" value="InterPro"/>
</dbReference>
<dbReference type="GO" id="GO:0003684">
    <property type="term" value="F:damaged DNA binding"/>
    <property type="evidence" value="ECO:0007669"/>
    <property type="project" value="UniProtKB-UniRule"/>
</dbReference>
<dbReference type="GO" id="GO:0030983">
    <property type="term" value="F:mismatched DNA binding"/>
    <property type="evidence" value="ECO:0007669"/>
    <property type="project" value="InterPro"/>
</dbReference>
<dbReference type="GO" id="GO:0006298">
    <property type="term" value="P:mismatch repair"/>
    <property type="evidence" value="ECO:0007669"/>
    <property type="project" value="UniProtKB-UniRule"/>
</dbReference>
<dbReference type="CDD" id="cd03284">
    <property type="entry name" value="ABC_MutS1"/>
    <property type="match status" value="1"/>
</dbReference>
<dbReference type="FunFam" id="3.40.1170.10:FF:000001">
    <property type="entry name" value="DNA mismatch repair protein MutS"/>
    <property type="match status" value="1"/>
</dbReference>
<dbReference type="FunFam" id="3.40.50.300:FF:000870">
    <property type="entry name" value="MutS protein homolog 4"/>
    <property type="match status" value="1"/>
</dbReference>
<dbReference type="Gene3D" id="1.10.1420.10">
    <property type="match status" value="2"/>
</dbReference>
<dbReference type="Gene3D" id="6.10.140.430">
    <property type="match status" value="1"/>
</dbReference>
<dbReference type="Gene3D" id="3.40.1170.10">
    <property type="entry name" value="DNA repair protein MutS, domain I"/>
    <property type="match status" value="1"/>
</dbReference>
<dbReference type="Gene3D" id="3.30.420.110">
    <property type="entry name" value="MutS, connector domain"/>
    <property type="match status" value="1"/>
</dbReference>
<dbReference type="Gene3D" id="3.40.50.300">
    <property type="entry name" value="P-loop containing nucleotide triphosphate hydrolases"/>
    <property type="match status" value="1"/>
</dbReference>
<dbReference type="HAMAP" id="MF_00096">
    <property type="entry name" value="MutS"/>
    <property type="match status" value="1"/>
</dbReference>
<dbReference type="InterPro" id="IPR005748">
    <property type="entry name" value="DNA_mismatch_repair_MutS"/>
</dbReference>
<dbReference type="InterPro" id="IPR007695">
    <property type="entry name" value="DNA_mismatch_repair_MutS-lik_N"/>
</dbReference>
<dbReference type="InterPro" id="IPR017261">
    <property type="entry name" value="DNA_mismatch_repair_MutS/MSH"/>
</dbReference>
<dbReference type="InterPro" id="IPR000432">
    <property type="entry name" value="DNA_mismatch_repair_MutS_C"/>
</dbReference>
<dbReference type="InterPro" id="IPR007861">
    <property type="entry name" value="DNA_mismatch_repair_MutS_clamp"/>
</dbReference>
<dbReference type="InterPro" id="IPR007696">
    <property type="entry name" value="DNA_mismatch_repair_MutS_core"/>
</dbReference>
<dbReference type="InterPro" id="IPR016151">
    <property type="entry name" value="DNA_mismatch_repair_MutS_N"/>
</dbReference>
<dbReference type="InterPro" id="IPR036187">
    <property type="entry name" value="DNA_mismatch_repair_MutS_sf"/>
</dbReference>
<dbReference type="InterPro" id="IPR007860">
    <property type="entry name" value="DNA_mmatch_repair_MutS_con_dom"/>
</dbReference>
<dbReference type="InterPro" id="IPR045076">
    <property type="entry name" value="MutS"/>
</dbReference>
<dbReference type="InterPro" id="IPR036678">
    <property type="entry name" value="MutS_con_dom_sf"/>
</dbReference>
<dbReference type="InterPro" id="IPR027417">
    <property type="entry name" value="P-loop_NTPase"/>
</dbReference>
<dbReference type="NCBIfam" id="TIGR01070">
    <property type="entry name" value="mutS1"/>
    <property type="match status" value="1"/>
</dbReference>
<dbReference type="NCBIfam" id="NF003810">
    <property type="entry name" value="PRK05399.1"/>
    <property type="match status" value="1"/>
</dbReference>
<dbReference type="PANTHER" id="PTHR11361:SF34">
    <property type="entry name" value="DNA MISMATCH REPAIR PROTEIN MSH1, MITOCHONDRIAL"/>
    <property type="match status" value="1"/>
</dbReference>
<dbReference type="PANTHER" id="PTHR11361">
    <property type="entry name" value="DNA MISMATCH REPAIR PROTEIN MUTS FAMILY MEMBER"/>
    <property type="match status" value="1"/>
</dbReference>
<dbReference type="Pfam" id="PF01624">
    <property type="entry name" value="MutS_I"/>
    <property type="match status" value="1"/>
</dbReference>
<dbReference type="Pfam" id="PF05188">
    <property type="entry name" value="MutS_II"/>
    <property type="match status" value="1"/>
</dbReference>
<dbReference type="Pfam" id="PF05192">
    <property type="entry name" value="MutS_III"/>
    <property type="match status" value="1"/>
</dbReference>
<dbReference type="Pfam" id="PF05190">
    <property type="entry name" value="MutS_IV"/>
    <property type="match status" value="1"/>
</dbReference>
<dbReference type="Pfam" id="PF00488">
    <property type="entry name" value="MutS_V"/>
    <property type="match status" value="1"/>
</dbReference>
<dbReference type="PIRSF" id="PIRSF037677">
    <property type="entry name" value="DNA_mis_repair_Msh6"/>
    <property type="match status" value="1"/>
</dbReference>
<dbReference type="SMART" id="SM00534">
    <property type="entry name" value="MUTSac"/>
    <property type="match status" value="1"/>
</dbReference>
<dbReference type="SMART" id="SM00533">
    <property type="entry name" value="MUTSd"/>
    <property type="match status" value="1"/>
</dbReference>
<dbReference type="SUPFAM" id="SSF55271">
    <property type="entry name" value="DNA repair protein MutS, domain I"/>
    <property type="match status" value="1"/>
</dbReference>
<dbReference type="SUPFAM" id="SSF53150">
    <property type="entry name" value="DNA repair protein MutS, domain II"/>
    <property type="match status" value="1"/>
</dbReference>
<dbReference type="SUPFAM" id="SSF48334">
    <property type="entry name" value="DNA repair protein MutS, domain III"/>
    <property type="match status" value="1"/>
</dbReference>
<dbReference type="SUPFAM" id="SSF52540">
    <property type="entry name" value="P-loop containing nucleoside triphosphate hydrolases"/>
    <property type="match status" value="1"/>
</dbReference>
<dbReference type="PROSITE" id="PS00486">
    <property type="entry name" value="DNA_MISMATCH_REPAIR_2"/>
    <property type="match status" value="1"/>
</dbReference>
<keyword id="KW-0067">ATP-binding</keyword>
<keyword id="KW-0227">DNA damage</keyword>
<keyword id="KW-0234">DNA repair</keyword>
<keyword id="KW-0238">DNA-binding</keyword>
<keyword id="KW-0547">Nucleotide-binding</keyword>
<protein>
    <recommendedName>
        <fullName evidence="1">DNA mismatch repair protein MutS</fullName>
    </recommendedName>
</protein>
<reference key="1">
    <citation type="journal article" date="2010" name="Genome Biol. Evol.">
        <title>Continuing evolution of Burkholderia mallei through genome reduction and large-scale rearrangements.</title>
        <authorList>
            <person name="Losada L."/>
            <person name="Ronning C.M."/>
            <person name="DeShazer D."/>
            <person name="Woods D."/>
            <person name="Fedorova N."/>
            <person name="Kim H.S."/>
            <person name="Shabalina S.A."/>
            <person name="Pearson T.R."/>
            <person name="Brinkac L."/>
            <person name="Tan P."/>
            <person name="Nandi T."/>
            <person name="Crabtree J."/>
            <person name="Badger J."/>
            <person name="Beckstrom-Sternberg S."/>
            <person name="Saqib M."/>
            <person name="Schutzer S.E."/>
            <person name="Keim P."/>
            <person name="Nierman W.C."/>
        </authorList>
    </citation>
    <scope>NUCLEOTIDE SEQUENCE [LARGE SCALE GENOMIC DNA]</scope>
    <source>
        <strain>668</strain>
    </source>
</reference>
<accession>A3NB64</accession>
<evidence type="ECO:0000255" key="1">
    <source>
        <dbReference type="HAMAP-Rule" id="MF_00096"/>
    </source>
</evidence>
<gene>
    <name evidence="1" type="primary">mutS</name>
    <name type="ordered locus">BURPS668_2559</name>
</gene>
<proteinExistence type="inferred from homology"/>